<protein>
    <recommendedName>
        <fullName>Superoxide dismutase [Cu-Zn]</fullName>
        <ecNumber>1.15.1.1</ecNumber>
    </recommendedName>
</protein>
<name>SODC_CAPAN</name>
<comment type="function">
    <text>Destroys radicals which are normally produced within the cells and which are toxic to biological systems.</text>
</comment>
<comment type="catalytic activity">
    <reaction>
        <text>2 superoxide + 2 H(+) = H2O2 + O2</text>
        <dbReference type="Rhea" id="RHEA:20696"/>
        <dbReference type="ChEBI" id="CHEBI:15378"/>
        <dbReference type="ChEBI" id="CHEBI:15379"/>
        <dbReference type="ChEBI" id="CHEBI:16240"/>
        <dbReference type="ChEBI" id="CHEBI:18421"/>
        <dbReference type="EC" id="1.15.1.1"/>
    </reaction>
</comment>
<comment type="cofactor">
    <cofactor evidence="1">
        <name>Cu cation</name>
        <dbReference type="ChEBI" id="CHEBI:23378"/>
    </cofactor>
    <text evidence="1">Binds 1 copper ion per subunit.</text>
</comment>
<comment type="cofactor">
    <cofactor evidence="1">
        <name>Zn(2+)</name>
        <dbReference type="ChEBI" id="CHEBI:29105"/>
    </cofactor>
    <text evidence="1">Binds 1 zinc ion per subunit.</text>
</comment>
<comment type="subunit">
    <text evidence="1">Homodimer.</text>
</comment>
<comment type="subcellular location">
    <subcellularLocation>
        <location>Cytoplasm</location>
    </subcellularLocation>
</comment>
<comment type="similarity">
    <text evidence="2">Belongs to the Cu-Zn superoxide dismutase family.</text>
</comment>
<accession>O22373</accession>
<organism>
    <name type="scientific">Capsicum annuum</name>
    <name type="common">Capsicum pepper</name>
    <dbReference type="NCBI Taxonomy" id="4072"/>
    <lineage>
        <taxon>Eukaryota</taxon>
        <taxon>Viridiplantae</taxon>
        <taxon>Streptophyta</taxon>
        <taxon>Embryophyta</taxon>
        <taxon>Tracheophyta</taxon>
        <taxon>Spermatophyta</taxon>
        <taxon>Magnoliopsida</taxon>
        <taxon>eudicotyledons</taxon>
        <taxon>Gunneridae</taxon>
        <taxon>Pentapetalae</taxon>
        <taxon>asterids</taxon>
        <taxon>lamiids</taxon>
        <taxon>Solanales</taxon>
        <taxon>Solanaceae</taxon>
        <taxon>Solanoideae</taxon>
        <taxon>Capsiceae</taxon>
        <taxon>Capsicum</taxon>
    </lineage>
</organism>
<gene>
    <name type="primary">SODCC</name>
</gene>
<proteinExistence type="evidence at transcript level"/>
<evidence type="ECO:0000250" key="1"/>
<evidence type="ECO:0000305" key="2"/>
<keyword id="KW-0049">Antioxidant</keyword>
<keyword id="KW-0186">Copper</keyword>
<keyword id="KW-0963">Cytoplasm</keyword>
<keyword id="KW-1015">Disulfide bond</keyword>
<keyword id="KW-0479">Metal-binding</keyword>
<keyword id="KW-0560">Oxidoreductase</keyword>
<keyword id="KW-0862">Zinc</keyword>
<reference key="1">
    <citation type="journal article" date="1997" name="Mol. Cells">
        <title>Isolation and characterization of cytosolic copper/zinc superoxide dismutase from Capsicum annuum L.</title>
        <authorList>
            <person name="Kim Y.K."/>
            <person name="Kwon S.I."/>
            <person name="An C.S."/>
        </authorList>
    </citation>
    <scope>NUCLEOTIDE SEQUENCE [MRNA]</scope>
</reference>
<feature type="chain" id="PRO_0000164135" description="Superoxide dismutase [Cu-Zn]">
    <location>
        <begin position="1"/>
        <end position="152"/>
    </location>
</feature>
<feature type="binding site" evidence="1">
    <location>
        <position position="45"/>
    </location>
    <ligand>
        <name>Cu cation</name>
        <dbReference type="ChEBI" id="CHEBI:23378"/>
        <note>catalytic</note>
    </ligand>
</feature>
<feature type="binding site" evidence="1">
    <location>
        <position position="47"/>
    </location>
    <ligand>
        <name>Cu cation</name>
        <dbReference type="ChEBI" id="CHEBI:23378"/>
        <note>catalytic</note>
    </ligand>
</feature>
<feature type="binding site" evidence="1">
    <location>
        <position position="62"/>
    </location>
    <ligand>
        <name>Cu cation</name>
        <dbReference type="ChEBI" id="CHEBI:23378"/>
        <note>catalytic</note>
    </ligand>
</feature>
<feature type="binding site" evidence="1">
    <location>
        <position position="62"/>
    </location>
    <ligand>
        <name>Zn(2+)</name>
        <dbReference type="ChEBI" id="CHEBI:29105"/>
        <note>structural</note>
    </ligand>
</feature>
<feature type="binding site" evidence="1">
    <location>
        <position position="70"/>
    </location>
    <ligand>
        <name>Zn(2+)</name>
        <dbReference type="ChEBI" id="CHEBI:29105"/>
        <note>structural</note>
    </ligand>
</feature>
<feature type="binding site" evidence="1">
    <location>
        <position position="79"/>
    </location>
    <ligand>
        <name>Zn(2+)</name>
        <dbReference type="ChEBI" id="CHEBI:29105"/>
        <note>structural</note>
    </ligand>
</feature>
<feature type="binding site" evidence="1">
    <location>
        <position position="82"/>
    </location>
    <ligand>
        <name>Zn(2+)</name>
        <dbReference type="ChEBI" id="CHEBI:29105"/>
        <note>structural</note>
    </ligand>
</feature>
<feature type="binding site" evidence="1">
    <location>
        <position position="119"/>
    </location>
    <ligand>
        <name>Cu cation</name>
        <dbReference type="ChEBI" id="CHEBI:23378"/>
        <note>catalytic</note>
    </ligand>
</feature>
<feature type="disulfide bond" evidence="1">
    <location>
        <begin position="56"/>
        <end position="145"/>
    </location>
</feature>
<sequence>MVKAVAVLSSSECVSGTILFSQDGDAPTTVTGNVSGLKPGLHGFHVHALGDTTNGCMSTGPHYNPAGKEHGAPEDENRHAGDLGNITVGEDGTASFTITDEQIPLTGPQSIIGRGVVVHADPDDLGKGGHELTKTTGNAGGRVACGIIGLQG</sequence>
<dbReference type="EC" id="1.15.1.1"/>
<dbReference type="EMBL" id="AF009734">
    <property type="protein sequence ID" value="AAB66812.1"/>
    <property type="molecule type" value="mRNA"/>
</dbReference>
<dbReference type="PIR" id="T07925">
    <property type="entry name" value="T07925"/>
</dbReference>
<dbReference type="SMR" id="O22373"/>
<dbReference type="GO" id="GO:0005737">
    <property type="term" value="C:cytoplasm"/>
    <property type="evidence" value="ECO:0007669"/>
    <property type="project" value="UniProtKB-SubCell"/>
</dbReference>
<dbReference type="GO" id="GO:0005507">
    <property type="term" value="F:copper ion binding"/>
    <property type="evidence" value="ECO:0007669"/>
    <property type="project" value="InterPro"/>
</dbReference>
<dbReference type="GO" id="GO:0004784">
    <property type="term" value="F:superoxide dismutase activity"/>
    <property type="evidence" value="ECO:0007669"/>
    <property type="project" value="UniProtKB-EC"/>
</dbReference>
<dbReference type="CDD" id="cd00305">
    <property type="entry name" value="Cu-Zn_Superoxide_Dismutase"/>
    <property type="match status" value="1"/>
</dbReference>
<dbReference type="FunFam" id="2.60.40.200:FF:000001">
    <property type="entry name" value="Superoxide dismutase [Cu-Zn]"/>
    <property type="match status" value="1"/>
</dbReference>
<dbReference type="Gene3D" id="2.60.40.200">
    <property type="entry name" value="Superoxide dismutase, copper/zinc binding domain"/>
    <property type="match status" value="1"/>
</dbReference>
<dbReference type="InterPro" id="IPR036423">
    <property type="entry name" value="SOD-like_Cu/Zn_dom_sf"/>
</dbReference>
<dbReference type="InterPro" id="IPR024134">
    <property type="entry name" value="SOD_Cu/Zn_/chaperone"/>
</dbReference>
<dbReference type="InterPro" id="IPR018152">
    <property type="entry name" value="SOD_Cu/Zn_BS"/>
</dbReference>
<dbReference type="InterPro" id="IPR001424">
    <property type="entry name" value="SOD_Cu_Zn_dom"/>
</dbReference>
<dbReference type="PANTHER" id="PTHR10003">
    <property type="entry name" value="SUPEROXIDE DISMUTASE CU-ZN -RELATED"/>
    <property type="match status" value="1"/>
</dbReference>
<dbReference type="Pfam" id="PF00080">
    <property type="entry name" value="Sod_Cu"/>
    <property type="match status" value="1"/>
</dbReference>
<dbReference type="PRINTS" id="PR00068">
    <property type="entry name" value="CUZNDISMTASE"/>
</dbReference>
<dbReference type="SUPFAM" id="SSF49329">
    <property type="entry name" value="Cu,Zn superoxide dismutase-like"/>
    <property type="match status" value="1"/>
</dbReference>
<dbReference type="PROSITE" id="PS00087">
    <property type="entry name" value="SOD_CU_ZN_1"/>
    <property type="match status" value="1"/>
</dbReference>
<dbReference type="PROSITE" id="PS00332">
    <property type="entry name" value="SOD_CU_ZN_2"/>
    <property type="match status" value="1"/>
</dbReference>